<accession>Q9D119</accession>
<accession>A2ABX5</accession>
<proteinExistence type="evidence at transcript level"/>
<reference key="1">
    <citation type="journal article" date="2005" name="Science">
        <title>The transcriptional landscape of the mammalian genome.</title>
        <authorList>
            <person name="Carninci P."/>
            <person name="Kasukawa T."/>
            <person name="Katayama S."/>
            <person name="Gough J."/>
            <person name="Frith M.C."/>
            <person name="Maeda N."/>
            <person name="Oyama R."/>
            <person name="Ravasi T."/>
            <person name="Lenhard B."/>
            <person name="Wells C."/>
            <person name="Kodzius R."/>
            <person name="Shimokawa K."/>
            <person name="Bajic V.B."/>
            <person name="Brenner S.E."/>
            <person name="Batalov S."/>
            <person name="Forrest A.R."/>
            <person name="Zavolan M."/>
            <person name="Davis M.J."/>
            <person name="Wilming L.G."/>
            <person name="Aidinis V."/>
            <person name="Allen J.E."/>
            <person name="Ambesi-Impiombato A."/>
            <person name="Apweiler R."/>
            <person name="Aturaliya R.N."/>
            <person name="Bailey T.L."/>
            <person name="Bansal M."/>
            <person name="Baxter L."/>
            <person name="Beisel K.W."/>
            <person name="Bersano T."/>
            <person name="Bono H."/>
            <person name="Chalk A.M."/>
            <person name="Chiu K.P."/>
            <person name="Choudhary V."/>
            <person name="Christoffels A."/>
            <person name="Clutterbuck D.R."/>
            <person name="Crowe M.L."/>
            <person name="Dalla E."/>
            <person name="Dalrymple B.P."/>
            <person name="de Bono B."/>
            <person name="Della Gatta G."/>
            <person name="di Bernardo D."/>
            <person name="Down T."/>
            <person name="Engstrom P."/>
            <person name="Fagiolini M."/>
            <person name="Faulkner G."/>
            <person name="Fletcher C.F."/>
            <person name="Fukushima T."/>
            <person name="Furuno M."/>
            <person name="Futaki S."/>
            <person name="Gariboldi M."/>
            <person name="Georgii-Hemming P."/>
            <person name="Gingeras T.R."/>
            <person name="Gojobori T."/>
            <person name="Green R.E."/>
            <person name="Gustincich S."/>
            <person name="Harbers M."/>
            <person name="Hayashi Y."/>
            <person name="Hensch T.K."/>
            <person name="Hirokawa N."/>
            <person name="Hill D."/>
            <person name="Huminiecki L."/>
            <person name="Iacono M."/>
            <person name="Ikeo K."/>
            <person name="Iwama A."/>
            <person name="Ishikawa T."/>
            <person name="Jakt M."/>
            <person name="Kanapin A."/>
            <person name="Katoh M."/>
            <person name="Kawasawa Y."/>
            <person name="Kelso J."/>
            <person name="Kitamura H."/>
            <person name="Kitano H."/>
            <person name="Kollias G."/>
            <person name="Krishnan S.P."/>
            <person name="Kruger A."/>
            <person name="Kummerfeld S.K."/>
            <person name="Kurochkin I.V."/>
            <person name="Lareau L.F."/>
            <person name="Lazarevic D."/>
            <person name="Lipovich L."/>
            <person name="Liu J."/>
            <person name="Liuni S."/>
            <person name="McWilliam S."/>
            <person name="Madan Babu M."/>
            <person name="Madera M."/>
            <person name="Marchionni L."/>
            <person name="Matsuda H."/>
            <person name="Matsuzawa S."/>
            <person name="Miki H."/>
            <person name="Mignone F."/>
            <person name="Miyake S."/>
            <person name="Morris K."/>
            <person name="Mottagui-Tabar S."/>
            <person name="Mulder N."/>
            <person name="Nakano N."/>
            <person name="Nakauchi H."/>
            <person name="Ng P."/>
            <person name="Nilsson R."/>
            <person name="Nishiguchi S."/>
            <person name="Nishikawa S."/>
            <person name="Nori F."/>
            <person name="Ohara O."/>
            <person name="Okazaki Y."/>
            <person name="Orlando V."/>
            <person name="Pang K.C."/>
            <person name="Pavan W.J."/>
            <person name="Pavesi G."/>
            <person name="Pesole G."/>
            <person name="Petrovsky N."/>
            <person name="Piazza S."/>
            <person name="Reed J."/>
            <person name="Reid J.F."/>
            <person name="Ring B.Z."/>
            <person name="Ringwald M."/>
            <person name="Rost B."/>
            <person name="Ruan Y."/>
            <person name="Salzberg S.L."/>
            <person name="Sandelin A."/>
            <person name="Schneider C."/>
            <person name="Schoenbach C."/>
            <person name="Sekiguchi K."/>
            <person name="Semple C.A."/>
            <person name="Seno S."/>
            <person name="Sessa L."/>
            <person name="Sheng Y."/>
            <person name="Shibata Y."/>
            <person name="Shimada H."/>
            <person name="Shimada K."/>
            <person name="Silva D."/>
            <person name="Sinclair B."/>
            <person name="Sperling S."/>
            <person name="Stupka E."/>
            <person name="Sugiura K."/>
            <person name="Sultana R."/>
            <person name="Takenaka Y."/>
            <person name="Taki K."/>
            <person name="Tammoja K."/>
            <person name="Tan S.L."/>
            <person name="Tang S."/>
            <person name="Taylor M.S."/>
            <person name="Tegner J."/>
            <person name="Teichmann S.A."/>
            <person name="Ueda H.R."/>
            <person name="van Nimwegen E."/>
            <person name="Verardo R."/>
            <person name="Wei C.L."/>
            <person name="Yagi K."/>
            <person name="Yamanishi H."/>
            <person name="Zabarovsky E."/>
            <person name="Zhu S."/>
            <person name="Zimmer A."/>
            <person name="Hide W."/>
            <person name="Bult C."/>
            <person name="Grimmond S.M."/>
            <person name="Teasdale R.D."/>
            <person name="Liu E.T."/>
            <person name="Brusic V."/>
            <person name="Quackenbush J."/>
            <person name="Wahlestedt C."/>
            <person name="Mattick J.S."/>
            <person name="Hume D.A."/>
            <person name="Kai C."/>
            <person name="Sasaki D."/>
            <person name="Tomaru Y."/>
            <person name="Fukuda S."/>
            <person name="Kanamori-Katayama M."/>
            <person name="Suzuki M."/>
            <person name="Aoki J."/>
            <person name="Arakawa T."/>
            <person name="Iida J."/>
            <person name="Imamura K."/>
            <person name="Itoh M."/>
            <person name="Kato T."/>
            <person name="Kawaji H."/>
            <person name="Kawagashira N."/>
            <person name="Kawashima T."/>
            <person name="Kojima M."/>
            <person name="Kondo S."/>
            <person name="Konno H."/>
            <person name="Nakano K."/>
            <person name="Ninomiya N."/>
            <person name="Nishio T."/>
            <person name="Okada M."/>
            <person name="Plessy C."/>
            <person name="Shibata K."/>
            <person name="Shiraki T."/>
            <person name="Suzuki S."/>
            <person name="Tagami M."/>
            <person name="Waki K."/>
            <person name="Watahiki A."/>
            <person name="Okamura-Oho Y."/>
            <person name="Suzuki H."/>
            <person name="Kawai J."/>
            <person name="Hayashizaki Y."/>
        </authorList>
    </citation>
    <scope>NUCLEOTIDE SEQUENCE [LARGE SCALE MRNA]</scope>
    <source>
        <strain>C57BL/6J</strain>
    </source>
</reference>
<reference key="2">
    <citation type="journal article" date="2009" name="PLoS Biol.">
        <title>Lineage-specific biology revealed by a finished genome assembly of the mouse.</title>
        <authorList>
            <person name="Church D.M."/>
            <person name="Goodstadt L."/>
            <person name="Hillier L.W."/>
            <person name="Zody M.C."/>
            <person name="Goldstein S."/>
            <person name="She X."/>
            <person name="Bult C.J."/>
            <person name="Agarwala R."/>
            <person name="Cherry J.L."/>
            <person name="DiCuccio M."/>
            <person name="Hlavina W."/>
            <person name="Kapustin Y."/>
            <person name="Meric P."/>
            <person name="Maglott D."/>
            <person name="Birtle Z."/>
            <person name="Marques A.C."/>
            <person name="Graves T."/>
            <person name="Zhou S."/>
            <person name="Teague B."/>
            <person name="Potamousis K."/>
            <person name="Churas C."/>
            <person name="Place M."/>
            <person name="Herschleb J."/>
            <person name="Runnheim R."/>
            <person name="Forrest D."/>
            <person name="Amos-Landgraf J."/>
            <person name="Schwartz D.C."/>
            <person name="Cheng Z."/>
            <person name="Lindblad-Toh K."/>
            <person name="Eichler E.E."/>
            <person name="Ponting C.P."/>
        </authorList>
    </citation>
    <scope>NUCLEOTIDE SEQUENCE [LARGE SCALE GENOMIC DNA]</scope>
    <source>
        <strain>C57BL/6J</strain>
    </source>
</reference>
<reference key="3">
    <citation type="journal article" date="2004" name="Genome Res.">
        <title>The status, quality, and expansion of the NIH full-length cDNA project: the Mammalian Gene Collection (MGC).</title>
        <authorList>
            <consortium name="The MGC Project Team"/>
        </authorList>
    </citation>
    <scope>NUCLEOTIDE SEQUENCE [LARGE SCALE MRNA]</scope>
</reference>
<keyword id="KW-0040">ANK repeat</keyword>
<keyword id="KW-0650">Protein phosphatase inhibitor</keyword>
<keyword id="KW-1185">Reference proteome</keyword>
<keyword id="KW-0677">Repeat</keyword>
<dbReference type="EMBL" id="AK004064">
    <property type="protein sequence ID" value="BAB23150.1"/>
    <property type="molecule type" value="mRNA"/>
</dbReference>
<dbReference type="EMBL" id="AL663030">
    <property type="status" value="NOT_ANNOTATED_CDS"/>
    <property type="molecule type" value="Genomic_DNA"/>
</dbReference>
<dbReference type="EMBL" id="BC115957">
    <property type="protein sequence ID" value="AAI15958.1"/>
    <property type="molecule type" value="mRNA"/>
</dbReference>
<dbReference type="CCDS" id="CCDS36392.1"/>
<dbReference type="RefSeq" id="NP_081090.1">
    <property type="nucleotide sequence ID" value="NM_026814.3"/>
</dbReference>
<dbReference type="SMR" id="Q9D119"/>
<dbReference type="FunCoup" id="Q9D119">
    <property type="interactions" value="2"/>
</dbReference>
<dbReference type="STRING" id="10090.ENSMUSP00000026121"/>
<dbReference type="iPTMnet" id="Q9D119"/>
<dbReference type="PhosphoSitePlus" id="Q9D119"/>
<dbReference type="PaxDb" id="10090-ENSMUSP00000026121"/>
<dbReference type="ProteomicsDB" id="291726"/>
<dbReference type="Antibodypedia" id="32907">
    <property type="antibodies" value="93 antibodies from 16 providers"/>
</dbReference>
<dbReference type="Ensembl" id="ENSMUST00000026121.3">
    <property type="protein sequence ID" value="ENSMUSP00000026121.3"/>
    <property type="gene ID" value="ENSMUSG00000025129.3"/>
</dbReference>
<dbReference type="GeneID" id="68701"/>
<dbReference type="KEGG" id="mmu:68701"/>
<dbReference type="UCSC" id="uc007mth.1">
    <property type="organism name" value="mouse"/>
</dbReference>
<dbReference type="AGR" id="MGI:1915951"/>
<dbReference type="CTD" id="116729"/>
<dbReference type="MGI" id="MGI:1915951">
    <property type="gene designation" value="Ppp1r27"/>
</dbReference>
<dbReference type="VEuPathDB" id="HostDB:ENSMUSG00000025129"/>
<dbReference type="eggNOG" id="KOG0505">
    <property type="taxonomic scope" value="Eukaryota"/>
</dbReference>
<dbReference type="GeneTree" id="ENSGT00940000159603"/>
<dbReference type="HOGENOM" id="CLU_000134_41_0_1"/>
<dbReference type="InParanoid" id="Q9D119"/>
<dbReference type="OMA" id="QRDATND"/>
<dbReference type="OrthoDB" id="71307at2759"/>
<dbReference type="PhylomeDB" id="Q9D119"/>
<dbReference type="TreeFam" id="TF333311"/>
<dbReference type="BioGRID-ORCS" id="68701">
    <property type="hits" value="4 hits in 77 CRISPR screens"/>
</dbReference>
<dbReference type="PRO" id="PR:Q9D119"/>
<dbReference type="Proteomes" id="UP000000589">
    <property type="component" value="Chromosome 11"/>
</dbReference>
<dbReference type="RNAct" id="Q9D119">
    <property type="molecule type" value="protein"/>
</dbReference>
<dbReference type="Bgee" id="ENSMUSG00000025129">
    <property type="expression patterns" value="Expressed in soleus muscle and 54 other cell types or tissues"/>
</dbReference>
<dbReference type="GO" id="GO:0019902">
    <property type="term" value="F:phosphatase binding"/>
    <property type="evidence" value="ECO:0000250"/>
    <property type="project" value="UniProtKB"/>
</dbReference>
<dbReference type="GO" id="GO:0004864">
    <property type="term" value="F:protein phosphatase inhibitor activity"/>
    <property type="evidence" value="ECO:0007669"/>
    <property type="project" value="UniProtKB-KW"/>
</dbReference>
<dbReference type="FunFam" id="1.25.40.20:FF:000189">
    <property type="entry name" value="Protein phosphatase 1 regulatory subunit 27"/>
    <property type="match status" value="1"/>
</dbReference>
<dbReference type="Gene3D" id="1.25.40.20">
    <property type="entry name" value="Ankyrin repeat-containing domain"/>
    <property type="match status" value="1"/>
</dbReference>
<dbReference type="InterPro" id="IPR002110">
    <property type="entry name" value="Ankyrin_rpt"/>
</dbReference>
<dbReference type="InterPro" id="IPR036770">
    <property type="entry name" value="Ankyrin_rpt-contain_sf"/>
</dbReference>
<dbReference type="InterPro" id="IPR053080">
    <property type="entry name" value="PP1_regulatory_subunit_27"/>
</dbReference>
<dbReference type="PANTHER" id="PTHR46899">
    <property type="entry name" value="PROTEIN PHOSPHATASE 1 REGULATORY SUBUNIT 27"/>
    <property type="match status" value="1"/>
</dbReference>
<dbReference type="PANTHER" id="PTHR46899:SF3">
    <property type="entry name" value="PROTEIN PHOSPHATASE 1 REGULATORY SUBUNIT 27"/>
    <property type="match status" value="1"/>
</dbReference>
<dbReference type="Pfam" id="PF12796">
    <property type="entry name" value="Ank_2"/>
    <property type="match status" value="1"/>
</dbReference>
<dbReference type="SMART" id="SM00248">
    <property type="entry name" value="ANK"/>
    <property type="match status" value="2"/>
</dbReference>
<dbReference type="SUPFAM" id="SSF48403">
    <property type="entry name" value="Ankyrin repeat"/>
    <property type="match status" value="1"/>
</dbReference>
<dbReference type="PROSITE" id="PS50297">
    <property type="entry name" value="ANK_REP_REGION"/>
    <property type="match status" value="1"/>
</dbReference>
<dbReference type="PROSITE" id="PS50088">
    <property type="entry name" value="ANK_REPEAT"/>
    <property type="match status" value="2"/>
</dbReference>
<organism>
    <name type="scientific">Mus musculus</name>
    <name type="common">Mouse</name>
    <dbReference type="NCBI Taxonomy" id="10090"/>
    <lineage>
        <taxon>Eukaryota</taxon>
        <taxon>Metazoa</taxon>
        <taxon>Chordata</taxon>
        <taxon>Craniata</taxon>
        <taxon>Vertebrata</taxon>
        <taxon>Euteleostomi</taxon>
        <taxon>Mammalia</taxon>
        <taxon>Eutheria</taxon>
        <taxon>Euarchontoglires</taxon>
        <taxon>Glires</taxon>
        <taxon>Rodentia</taxon>
        <taxon>Myomorpha</taxon>
        <taxon>Muroidea</taxon>
        <taxon>Muridae</taxon>
        <taxon>Murinae</taxon>
        <taxon>Mus</taxon>
        <taxon>Mus</taxon>
    </lineage>
</organism>
<comment type="function">
    <text evidence="1">Inhibits phosphatase activity of protein phosphatase 1 (PP1) complexes.</text>
</comment>
<comment type="subunit">
    <text evidence="1">Interacts with DYSF and PPP1CA.</text>
</comment>
<evidence type="ECO:0000250" key="1"/>
<feature type="chain" id="PRO_0000264470" description="Protein phosphatase 1 regulatory subunit 27">
    <location>
        <begin position="1"/>
        <end position="154"/>
    </location>
</feature>
<feature type="repeat" description="ANK 1">
    <location>
        <begin position="63"/>
        <end position="92"/>
    </location>
</feature>
<feature type="repeat" description="ANK 2">
    <location>
        <begin position="96"/>
        <end position="125"/>
    </location>
</feature>
<gene>
    <name type="primary">Ppp1r27</name>
    <name type="synonym">Dysfip1</name>
</gene>
<sequence>MPSRTVRYARYSPRQRRRRMLADRSVRFPNDVLFLDHIRQGDLEQVGRFIRARKVSLDTIHPSGLAALHEAVLSGNLECVKLLVKYGADIHQRDETGWTPLHIACSDGYPDIARYLISLGADRDAANDDGDLPSDLIDPDFKDLVELFKGTSMD</sequence>
<name>PPR27_MOUSE</name>
<protein>
    <recommendedName>
        <fullName>Protein phosphatase 1 regulatory subunit 27</fullName>
    </recommendedName>
    <alternativeName>
        <fullName>Dysferlin-interacting protein 1</fullName>
    </alternativeName>
</protein>